<dbReference type="PIR" id="A02672">
    <property type="entry name" value="IRTR2"/>
</dbReference>
<dbReference type="Proteomes" id="UP000694395">
    <property type="component" value="Unplaced"/>
</dbReference>
<dbReference type="GO" id="GO:0000786">
    <property type="term" value="C:nucleosome"/>
    <property type="evidence" value="ECO:0007669"/>
    <property type="project" value="UniProtKB-KW"/>
</dbReference>
<dbReference type="GO" id="GO:0005634">
    <property type="term" value="C:nucleus"/>
    <property type="evidence" value="ECO:0007669"/>
    <property type="project" value="UniProtKB-SubCell"/>
</dbReference>
<dbReference type="GO" id="GO:0003677">
    <property type="term" value="F:DNA binding"/>
    <property type="evidence" value="ECO:0007669"/>
    <property type="project" value="UniProtKB-KW"/>
</dbReference>
<dbReference type="GO" id="GO:0030154">
    <property type="term" value="P:cell differentiation"/>
    <property type="evidence" value="ECO:0007669"/>
    <property type="project" value="UniProtKB-KW"/>
</dbReference>
<dbReference type="GO" id="GO:0030261">
    <property type="term" value="P:chromosome condensation"/>
    <property type="evidence" value="ECO:0007669"/>
    <property type="project" value="UniProtKB-KW"/>
</dbReference>
<dbReference type="GO" id="GO:0007283">
    <property type="term" value="P:spermatogenesis"/>
    <property type="evidence" value="ECO:0007669"/>
    <property type="project" value="UniProtKB-KW"/>
</dbReference>
<accession>P02330</accession>
<reference key="1">
    <citation type="journal article" date="1969" name="Int. J. Protein Res.">
        <title>A new method for fractionation of protamines and the amino acid sequences of salmine and three components of iridine.</title>
        <authorList>
            <person name="Ando T."/>
            <person name="Watanabe S."/>
        </authorList>
    </citation>
    <scope>PROTEIN SEQUENCE</scope>
</reference>
<proteinExistence type="evidence at protein level"/>
<organism>
    <name type="scientific">Oncorhynchus mykiss</name>
    <name type="common">Rainbow trout</name>
    <name type="synonym">Salmo gairdneri</name>
    <dbReference type="NCBI Taxonomy" id="8022"/>
    <lineage>
        <taxon>Eukaryota</taxon>
        <taxon>Metazoa</taxon>
        <taxon>Chordata</taxon>
        <taxon>Craniata</taxon>
        <taxon>Vertebrata</taxon>
        <taxon>Euteleostomi</taxon>
        <taxon>Actinopterygii</taxon>
        <taxon>Neopterygii</taxon>
        <taxon>Teleostei</taxon>
        <taxon>Protacanthopterygii</taxon>
        <taxon>Salmoniformes</taxon>
        <taxon>Salmonidae</taxon>
        <taxon>Salmoninae</taxon>
        <taxon>Oncorhynchus</taxon>
    </lineage>
</organism>
<evidence type="ECO:0000256" key="1">
    <source>
        <dbReference type="SAM" id="MobiDB-lite"/>
    </source>
</evidence>
<sequence>PRRRRSSSRPVRRRRARRVSRRRRRRGGRRRR</sequence>
<protein>
    <recommendedName>
        <fullName>Protamine-2</fullName>
    </recommendedName>
    <alternativeName>
        <fullName>Iridine II</fullName>
    </alternativeName>
</protein>
<name>PRT2_ONCMY</name>
<feature type="peptide" id="PRO_0000044846" description="Protamine-2">
    <location>
        <begin position="1"/>
        <end position="32"/>
    </location>
</feature>
<feature type="region of interest" description="Disordered" evidence="1">
    <location>
        <begin position="1"/>
        <end position="32"/>
    </location>
</feature>
<keyword id="KW-0158">Chromosome</keyword>
<keyword id="KW-0217">Developmental protein</keyword>
<keyword id="KW-0221">Differentiation</keyword>
<keyword id="KW-0903">Direct protein sequencing</keyword>
<keyword id="KW-0226">DNA condensation</keyword>
<keyword id="KW-0238">DNA-binding</keyword>
<keyword id="KW-0544">Nucleosome core</keyword>
<keyword id="KW-0539">Nucleus</keyword>
<keyword id="KW-0744">Spermatogenesis</keyword>
<comment type="function">
    <text>Protamines substitute for histones in the chromatin of sperm during the haploid phase of spermatogenesis. They compact sperm DNA into a highly condensed, stable and inactive complex.</text>
</comment>
<comment type="subcellular location">
    <subcellularLocation>
        <location>Nucleus</location>
    </subcellularLocation>
    <subcellularLocation>
        <location>Chromosome</location>
    </subcellularLocation>
</comment>
<comment type="tissue specificity">
    <text>Testis.</text>
</comment>